<organism>
    <name type="scientific">Desulforamulus reducens (strain ATCC BAA-1160 / DSM 100696 / MI-1)</name>
    <name type="common">Desulfotomaculum reducens</name>
    <dbReference type="NCBI Taxonomy" id="349161"/>
    <lineage>
        <taxon>Bacteria</taxon>
        <taxon>Bacillati</taxon>
        <taxon>Bacillota</taxon>
        <taxon>Clostridia</taxon>
        <taxon>Eubacteriales</taxon>
        <taxon>Peptococcaceae</taxon>
        <taxon>Desulforamulus</taxon>
    </lineage>
</organism>
<evidence type="ECO:0000255" key="1">
    <source>
        <dbReference type="HAMAP-Rule" id="MF_00014"/>
    </source>
</evidence>
<dbReference type="EMBL" id="CP000612">
    <property type="protein sequence ID" value="ABO50569.1"/>
    <property type="molecule type" value="Genomic_DNA"/>
</dbReference>
<dbReference type="RefSeq" id="WP_011878375.1">
    <property type="nucleotide sequence ID" value="NC_009253.1"/>
</dbReference>
<dbReference type="SMR" id="A4J666"/>
<dbReference type="STRING" id="349161.Dred_2052"/>
<dbReference type="KEGG" id="drm:Dred_2052"/>
<dbReference type="eggNOG" id="COG0806">
    <property type="taxonomic scope" value="Bacteria"/>
</dbReference>
<dbReference type="HOGENOM" id="CLU_077636_3_2_9"/>
<dbReference type="OrthoDB" id="9810331at2"/>
<dbReference type="Proteomes" id="UP000001556">
    <property type="component" value="Chromosome"/>
</dbReference>
<dbReference type="GO" id="GO:0005737">
    <property type="term" value="C:cytoplasm"/>
    <property type="evidence" value="ECO:0007669"/>
    <property type="project" value="UniProtKB-SubCell"/>
</dbReference>
<dbReference type="GO" id="GO:0005840">
    <property type="term" value="C:ribosome"/>
    <property type="evidence" value="ECO:0007669"/>
    <property type="project" value="InterPro"/>
</dbReference>
<dbReference type="GO" id="GO:0043022">
    <property type="term" value="F:ribosome binding"/>
    <property type="evidence" value="ECO:0007669"/>
    <property type="project" value="InterPro"/>
</dbReference>
<dbReference type="GO" id="GO:0042274">
    <property type="term" value="P:ribosomal small subunit biogenesis"/>
    <property type="evidence" value="ECO:0007669"/>
    <property type="project" value="UniProtKB-UniRule"/>
</dbReference>
<dbReference type="GO" id="GO:0006364">
    <property type="term" value="P:rRNA processing"/>
    <property type="evidence" value="ECO:0007669"/>
    <property type="project" value="UniProtKB-UniRule"/>
</dbReference>
<dbReference type="Gene3D" id="2.30.30.240">
    <property type="entry name" value="PRC-barrel domain"/>
    <property type="match status" value="1"/>
</dbReference>
<dbReference type="Gene3D" id="2.40.30.60">
    <property type="entry name" value="RimM"/>
    <property type="match status" value="1"/>
</dbReference>
<dbReference type="HAMAP" id="MF_00014">
    <property type="entry name" value="Ribosome_mat_RimM"/>
    <property type="match status" value="1"/>
</dbReference>
<dbReference type="InterPro" id="IPR011033">
    <property type="entry name" value="PRC_barrel-like_sf"/>
</dbReference>
<dbReference type="InterPro" id="IPR056792">
    <property type="entry name" value="PRC_RimM"/>
</dbReference>
<dbReference type="InterPro" id="IPR011961">
    <property type="entry name" value="RimM"/>
</dbReference>
<dbReference type="InterPro" id="IPR002676">
    <property type="entry name" value="RimM_N"/>
</dbReference>
<dbReference type="InterPro" id="IPR036976">
    <property type="entry name" value="RimM_N_sf"/>
</dbReference>
<dbReference type="InterPro" id="IPR009000">
    <property type="entry name" value="Transl_B-barrel_sf"/>
</dbReference>
<dbReference type="NCBIfam" id="TIGR02273">
    <property type="entry name" value="16S_RimM"/>
    <property type="match status" value="1"/>
</dbReference>
<dbReference type="PANTHER" id="PTHR33692">
    <property type="entry name" value="RIBOSOME MATURATION FACTOR RIMM"/>
    <property type="match status" value="1"/>
</dbReference>
<dbReference type="PANTHER" id="PTHR33692:SF1">
    <property type="entry name" value="RIBOSOME MATURATION FACTOR RIMM"/>
    <property type="match status" value="1"/>
</dbReference>
<dbReference type="Pfam" id="PF24986">
    <property type="entry name" value="PRC_RimM"/>
    <property type="match status" value="1"/>
</dbReference>
<dbReference type="Pfam" id="PF01782">
    <property type="entry name" value="RimM"/>
    <property type="match status" value="1"/>
</dbReference>
<dbReference type="SUPFAM" id="SSF50346">
    <property type="entry name" value="PRC-barrel domain"/>
    <property type="match status" value="1"/>
</dbReference>
<dbReference type="SUPFAM" id="SSF50447">
    <property type="entry name" value="Translation proteins"/>
    <property type="match status" value="1"/>
</dbReference>
<gene>
    <name evidence="1" type="primary">rimM</name>
    <name type="ordered locus">Dred_2052</name>
</gene>
<keyword id="KW-0143">Chaperone</keyword>
<keyword id="KW-0963">Cytoplasm</keyword>
<keyword id="KW-1185">Reference proteome</keyword>
<keyword id="KW-0690">Ribosome biogenesis</keyword>
<keyword id="KW-0698">rRNA processing</keyword>
<accession>A4J666</accession>
<protein>
    <recommendedName>
        <fullName evidence="1">Ribosome maturation factor RimM</fullName>
    </recommendedName>
</protein>
<sequence length="169" mass="19132">MSEEYITVGKVVNTQGIQGEVRIIPTTDFPERFVKNDKISVLLRGQRRDYTIERVWEHKQFIIIKFSEIPDMTAAEKLKGGLLQVTMEELVPLPEGNYYIFQIVGLKVVDENEQELGTVAQVLQTGANDVYVVKRSEGKDILIPAIKSVVKEINITEGKMKVELLEGLI</sequence>
<comment type="function">
    <text evidence="1">An accessory protein needed during the final step in the assembly of 30S ribosomal subunit, possibly for assembly of the head region. Essential for efficient processing of 16S rRNA. May be needed both before and after RbfA during the maturation of 16S rRNA. It has affinity for free ribosomal 30S subunits but not for 70S ribosomes.</text>
</comment>
<comment type="subunit">
    <text evidence="1">Binds ribosomal protein uS19.</text>
</comment>
<comment type="subcellular location">
    <subcellularLocation>
        <location evidence="1">Cytoplasm</location>
    </subcellularLocation>
</comment>
<comment type="domain">
    <text evidence="1">The PRC barrel domain binds ribosomal protein uS19.</text>
</comment>
<comment type="similarity">
    <text evidence="1">Belongs to the RimM family.</text>
</comment>
<proteinExistence type="inferred from homology"/>
<name>RIMM_DESRM</name>
<reference key="1">
    <citation type="submission" date="2007-03" db="EMBL/GenBank/DDBJ databases">
        <title>Complete sequence of Desulfotomaculum reducens MI-1.</title>
        <authorList>
            <consortium name="US DOE Joint Genome Institute"/>
            <person name="Copeland A."/>
            <person name="Lucas S."/>
            <person name="Lapidus A."/>
            <person name="Barry K."/>
            <person name="Detter J.C."/>
            <person name="Glavina del Rio T."/>
            <person name="Hammon N."/>
            <person name="Israni S."/>
            <person name="Dalin E."/>
            <person name="Tice H."/>
            <person name="Pitluck S."/>
            <person name="Sims D."/>
            <person name="Brettin T."/>
            <person name="Bruce D."/>
            <person name="Han C."/>
            <person name="Tapia R."/>
            <person name="Schmutz J."/>
            <person name="Larimer F."/>
            <person name="Land M."/>
            <person name="Hauser L."/>
            <person name="Kyrpides N."/>
            <person name="Kim E."/>
            <person name="Tebo B.M."/>
            <person name="Richardson P."/>
        </authorList>
    </citation>
    <scope>NUCLEOTIDE SEQUENCE [LARGE SCALE GENOMIC DNA]</scope>
    <source>
        <strain>ATCC BAA-1160 / DSM 100696 / MI-1</strain>
    </source>
</reference>
<feature type="chain" id="PRO_0000321724" description="Ribosome maturation factor RimM">
    <location>
        <begin position="1"/>
        <end position="169"/>
    </location>
</feature>
<feature type="domain" description="PRC barrel" evidence="1">
    <location>
        <begin position="95"/>
        <end position="168"/>
    </location>
</feature>